<accession>B2Y1V3</accession>
<proteinExistence type="inferred from homology"/>
<sequence length="34" mass="3735">MEVNILALIAVALFISIPTAFLVIIYVKTISENN</sequence>
<comment type="function">
    <text evidence="1">One of the components of the core complex of photosystem II (PSII). PSII is a light-driven water:plastoquinone oxidoreductase that uses light energy to abstract electrons from H(2)O, generating O(2) and a proton gradient subsequently used for ATP formation. It consists of a core antenna complex that captures photons, and an electron transfer chain that converts photonic excitation into a charge separation. This subunit is found at the monomer-monomer interface.</text>
</comment>
<comment type="subunit">
    <text evidence="1">PSII is composed of 1 copy each of membrane proteins PsbA, PsbB, PsbC, PsbD, PsbE, PsbF, PsbH, PsbI, PsbJ, PsbK, PsbL, PsbM, PsbT, PsbX, PsbY, PsbZ, Psb30/Ycf12, at least 3 peripheral proteins of the oxygen-evolving complex and a large number of cofactors. It forms dimeric complexes.</text>
</comment>
<comment type="subcellular location">
    <subcellularLocation>
        <location evidence="1">Plastid</location>
        <location evidence="1">Chloroplast thylakoid membrane</location>
        <topology evidence="1">Single-pass membrane protein</topology>
    </subcellularLocation>
</comment>
<comment type="similarity">
    <text evidence="1">Belongs to the PsbM family.</text>
</comment>
<dbReference type="EMBL" id="EU342371">
    <property type="protein sequence ID" value="ABY26783.1"/>
    <property type="molecule type" value="Genomic_DNA"/>
</dbReference>
<dbReference type="EMBL" id="AP009568">
    <property type="protein sequence ID" value="BAH11235.1"/>
    <property type="molecule type" value="Genomic_DNA"/>
</dbReference>
<dbReference type="RefSeq" id="YP_001876570.1">
    <property type="nucleotide sequence ID" value="NC_010654.1"/>
</dbReference>
<dbReference type="SMR" id="B2Y1V3"/>
<dbReference type="GeneID" id="6276189"/>
<dbReference type="GO" id="GO:0009535">
    <property type="term" value="C:chloroplast thylakoid membrane"/>
    <property type="evidence" value="ECO:0007669"/>
    <property type="project" value="UniProtKB-SubCell"/>
</dbReference>
<dbReference type="GO" id="GO:0009523">
    <property type="term" value="C:photosystem II"/>
    <property type="evidence" value="ECO:0007669"/>
    <property type="project" value="UniProtKB-KW"/>
</dbReference>
<dbReference type="GO" id="GO:0019684">
    <property type="term" value="P:photosynthesis, light reaction"/>
    <property type="evidence" value="ECO:0007669"/>
    <property type="project" value="InterPro"/>
</dbReference>
<dbReference type="HAMAP" id="MF_00438">
    <property type="entry name" value="PSII_PsbM"/>
    <property type="match status" value="1"/>
</dbReference>
<dbReference type="InterPro" id="IPR007826">
    <property type="entry name" value="PSII_PsbM"/>
</dbReference>
<dbReference type="InterPro" id="IPR037269">
    <property type="entry name" value="PSII_PsbM_sf"/>
</dbReference>
<dbReference type="NCBIfam" id="TIGR03038">
    <property type="entry name" value="PS_II_psbM"/>
    <property type="match status" value="1"/>
</dbReference>
<dbReference type="PANTHER" id="PTHR35774">
    <property type="entry name" value="PHOTOSYSTEM II REACTION CENTER PROTEIN M"/>
    <property type="match status" value="1"/>
</dbReference>
<dbReference type="PANTHER" id="PTHR35774:SF1">
    <property type="entry name" value="PHOTOSYSTEM II REACTION CENTER PROTEIN M"/>
    <property type="match status" value="1"/>
</dbReference>
<dbReference type="Pfam" id="PF05151">
    <property type="entry name" value="PsbM"/>
    <property type="match status" value="1"/>
</dbReference>
<dbReference type="SUPFAM" id="SSF161033">
    <property type="entry name" value="Photosystem II reaction center protein M, PsbM"/>
    <property type="match status" value="1"/>
</dbReference>
<gene>
    <name evidence="1" type="primary">psbM</name>
</gene>
<reference key="1">
    <citation type="journal article" date="2008" name="BMC Evol. Biol.">
        <title>The complete plastid genome sequence of Welwitschia mirabilis: an unusually compact plastome with accelerated divergence rates.</title>
        <authorList>
            <person name="McCoy S.R."/>
            <person name="Kuehl J.V."/>
            <person name="Boore J.L."/>
            <person name="Raubeson L.A."/>
        </authorList>
    </citation>
    <scope>NUCLEOTIDE SEQUENCE [LARGE SCALE GENOMIC DNA]</scope>
</reference>
<reference key="2">
    <citation type="journal article" date="2009" name="Mol. Phylogenet. Evol.">
        <title>Evolution of reduced and compact chloroplast genomes (cpDNAs) in gnetophytes: Selection toward a lower-cost strategy.</title>
        <authorList>
            <person name="Wu C.-S."/>
            <person name="Lai Y.-T."/>
            <person name="Lin C.-P."/>
            <person name="Wang Y.-N."/>
            <person name="Chaw S.-M."/>
        </authorList>
    </citation>
    <scope>NUCLEOTIDE SEQUENCE [LARGE SCALE GENOMIC DNA]</scope>
</reference>
<keyword id="KW-0150">Chloroplast</keyword>
<keyword id="KW-0472">Membrane</keyword>
<keyword id="KW-0602">Photosynthesis</keyword>
<keyword id="KW-0604">Photosystem II</keyword>
<keyword id="KW-0934">Plastid</keyword>
<keyword id="KW-0674">Reaction center</keyword>
<keyword id="KW-0793">Thylakoid</keyword>
<keyword id="KW-0812">Transmembrane</keyword>
<keyword id="KW-1133">Transmembrane helix</keyword>
<protein>
    <recommendedName>
        <fullName evidence="1">Photosystem II reaction center protein M</fullName>
        <shortName evidence="1">PSII-M</shortName>
    </recommendedName>
</protein>
<organism>
    <name type="scientific">Welwitschia mirabilis</name>
    <name type="common">Tree tumbo</name>
    <name type="synonym">Welwitschia bainesii</name>
    <dbReference type="NCBI Taxonomy" id="3377"/>
    <lineage>
        <taxon>Eukaryota</taxon>
        <taxon>Viridiplantae</taxon>
        <taxon>Streptophyta</taxon>
        <taxon>Embryophyta</taxon>
        <taxon>Tracheophyta</taxon>
        <taxon>Spermatophyta</taxon>
        <taxon>Gnetopsida</taxon>
        <taxon>Gnetidae</taxon>
        <taxon>Welwitschiales</taxon>
        <taxon>Welwitschiaceae</taxon>
        <taxon>Welwitschia</taxon>
    </lineage>
</organism>
<geneLocation type="chloroplast"/>
<feature type="chain" id="PRO_1000192882" description="Photosystem II reaction center protein M">
    <location>
        <begin position="1"/>
        <end position="34"/>
    </location>
</feature>
<feature type="transmembrane region" description="Helical" evidence="1">
    <location>
        <begin position="5"/>
        <end position="25"/>
    </location>
</feature>
<name>PSBM_WELMI</name>
<evidence type="ECO:0000255" key="1">
    <source>
        <dbReference type="HAMAP-Rule" id="MF_00438"/>
    </source>
</evidence>